<accession>P21358</accession>
<accession>Q85QA5</accession>
<proteinExistence type="inferred from homology"/>
<keyword id="KW-0496">Mitochondrion</keyword>
<keyword id="KW-0687">Ribonucleoprotein</keyword>
<keyword id="KW-0689">Ribosomal protein</keyword>
<comment type="function">
    <text evidence="1">Essential for mitochondrial protein synthesis and required for the maturation of small ribosomal subunits.</text>
</comment>
<comment type="subcellular location">
    <subcellularLocation>
        <location>Mitochondrion</location>
    </subcellularLocation>
</comment>
<comment type="similarity">
    <text evidence="2">Belongs to the universal ribosomal protein uS3 family.</text>
</comment>
<evidence type="ECO:0000250" key="1"/>
<evidence type="ECO:0000305" key="2"/>
<geneLocation type="mitochondrion"/>
<feature type="chain" id="PRO_0000220069" description="Small ribosomal subunit protein uS3m">
    <location>
        <begin position="1"/>
        <end position="339"/>
    </location>
</feature>
<feature type="sequence conflict" description="In Ref. 1; CAA26652." evidence="2" ref="1">
    <original>NI</original>
    <variation>IN</variation>
    <location>
        <begin position="131"/>
        <end position="132"/>
    </location>
</feature>
<name>RMAR_CANGA</name>
<dbReference type="EMBL" id="X02893">
    <property type="protein sequence ID" value="CAA26652.1"/>
    <property type="molecule type" value="Genomic_DNA"/>
</dbReference>
<dbReference type="EMBL" id="AJ511533">
    <property type="protein sequence ID" value="CAD54417.1"/>
    <property type="molecule type" value="Genomic_DNA"/>
</dbReference>
<dbReference type="PIR" id="S04682">
    <property type="entry name" value="S04682"/>
</dbReference>
<dbReference type="RefSeq" id="NP_818776.1">
    <property type="nucleotide sequence ID" value="NC_004691.1"/>
</dbReference>
<dbReference type="SMR" id="P21358"/>
<dbReference type="FunCoup" id="P21358">
    <property type="interactions" value="91"/>
</dbReference>
<dbReference type="STRING" id="284593.P21358"/>
<dbReference type="EnsemblFungi" id="CaglfMp02-T">
    <property type="protein sequence ID" value="CaglfMp02-T-p1"/>
    <property type="gene ID" value="CaglfMp02"/>
</dbReference>
<dbReference type="GeneID" id="807019"/>
<dbReference type="KEGG" id="cgr:807019"/>
<dbReference type="CGD" id="CAL0139476">
    <property type="gene designation" value="VAR1"/>
</dbReference>
<dbReference type="VEuPathDB" id="FungiDB:CaglfMp02"/>
<dbReference type="InParanoid" id="P21358"/>
<dbReference type="GO" id="GO:0005763">
    <property type="term" value="C:mitochondrial small ribosomal subunit"/>
    <property type="evidence" value="ECO:0000266"/>
    <property type="project" value="CGD"/>
</dbReference>
<dbReference type="GO" id="GO:0003735">
    <property type="term" value="F:structural constituent of ribosome"/>
    <property type="evidence" value="ECO:0000266"/>
    <property type="project" value="CGD"/>
</dbReference>
<dbReference type="GO" id="GO:0032543">
    <property type="term" value="P:mitochondrial translation"/>
    <property type="evidence" value="ECO:0000266"/>
    <property type="project" value="CGD"/>
</dbReference>
<dbReference type="InterPro" id="IPR007980">
    <property type="entry name" value="Ribosomal_uS3m_fun"/>
</dbReference>
<dbReference type="Pfam" id="PF05316">
    <property type="entry name" value="VAR1"/>
    <property type="match status" value="1"/>
</dbReference>
<organism>
    <name type="scientific">Candida glabrata (strain ATCC 2001 / BCRC 20586 / JCM 3761 / NBRC 0622 / NRRL Y-65 / CBS 138)</name>
    <name type="common">Yeast</name>
    <name type="synonym">Nakaseomyces glabratus</name>
    <dbReference type="NCBI Taxonomy" id="284593"/>
    <lineage>
        <taxon>Eukaryota</taxon>
        <taxon>Fungi</taxon>
        <taxon>Dikarya</taxon>
        <taxon>Ascomycota</taxon>
        <taxon>Saccharomycotina</taxon>
        <taxon>Saccharomycetes</taxon>
        <taxon>Saccharomycetales</taxon>
        <taxon>Saccharomycetaceae</taxon>
        <taxon>Nakaseomyces</taxon>
    </lineage>
</organism>
<reference key="1">
    <citation type="journal article" date="1985" name="J. Mol. Biol.">
        <title>VAR1 gene on the mitochondrial genome of Torulopsis glabrata.</title>
        <authorList>
            <person name="Ainley W.M."/>
            <person name="Macreadie I.G."/>
            <person name="Butow R.A."/>
        </authorList>
    </citation>
    <scope>NUCLEOTIDE SEQUENCE [GENOMIC DNA]</scope>
</reference>
<reference key="2">
    <citation type="journal article" date="2003" name="FEBS Lett.">
        <title>The complete mitochondrial genome sequence of the pathogenic yeast Candida (Torulopsis) glabrata.</title>
        <authorList>
            <person name="Koszul R."/>
            <person name="Malpertuy A."/>
            <person name="Frangeul L."/>
            <person name="Bouchier C."/>
            <person name="Wincker P."/>
            <person name="Thierry A."/>
            <person name="Duthoy S."/>
            <person name="Ferris S."/>
            <person name="Hennequin C."/>
            <person name="Dujon B."/>
        </authorList>
    </citation>
    <scope>NUCLEOTIDE SEQUENCE [LARGE SCALE GENOMIC DNA]</scope>
    <source>
        <strain>ATCC 2001 / BCRC 20586 / JCM 3761 / NBRC 0622 / NRRL Y-65 / CBS 138</strain>
    </source>
</reference>
<gene>
    <name type="primary">VAR1</name>
</gene>
<protein>
    <recommendedName>
        <fullName evidence="2">Small ribosomal subunit protein uS3m</fullName>
    </recommendedName>
    <alternativeName>
        <fullName>Ribosomal protein VAR1, mitochondrial</fullName>
    </alternativeName>
</protein>
<sequence length="339" mass="40828">MKLMKLLKLNINNNNNNKLLLKNLLLLMNKNRLMNKLSNNNKYLSELNNKGNSLQHLNNMNNWKLQNYNYNKNNTINNYINSKLINKLLYKLMSLKNNKIIISKPLYKINMNVINIRFYYYNMNNYNYNNNIYYINMINKLMNRLNINMNNLSNILSYYYNKKVIIEPIKLKYLYNNNEIMTKYISLLDNNKYNNGLLMEYQRTLNNIMPKLNDHNISMNYINNINNINKLKYNNILLNNNNNINNIYNNININNNMNLLMFKYLIGWSIMLKGRLNKNISRISTTYLNNGTFNNKKYLWGNLNNNFKLNYINSNNNIYNYNNINKNGKYNIKVKLNYI</sequence>